<feature type="chain" id="PRO_0000280477" description="Rho GTPase-activating protein 28">
    <location>
        <begin position="1"/>
        <end position="729"/>
    </location>
</feature>
<feature type="domain" description="Rho-GAP" evidence="2">
    <location>
        <begin position="384"/>
        <end position="581"/>
    </location>
</feature>
<feature type="region of interest" description="Disordered" evidence="3">
    <location>
        <begin position="1"/>
        <end position="78"/>
    </location>
</feature>
<feature type="region of interest" description="Disordered" evidence="3">
    <location>
        <begin position="180"/>
        <end position="234"/>
    </location>
</feature>
<feature type="compositionally biased region" description="Basic residues" evidence="3">
    <location>
        <begin position="37"/>
        <end position="49"/>
    </location>
</feature>
<feature type="compositionally biased region" description="Low complexity" evidence="3">
    <location>
        <begin position="63"/>
        <end position="76"/>
    </location>
</feature>
<feature type="compositionally biased region" description="Polar residues" evidence="3">
    <location>
        <begin position="221"/>
        <end position="231"/>
    </location>
</feature>
<feature type="site" description="Arginine finger; crucial for GTP hydrolysis by stabilizing the transition state" evidence="2">
    <location>
        <position position="425"/>
    </location>
</feature>
<feature type="modified residue" description="Phosphoserine" evidence="8">
    <location>
        <position position="70"/>
    </location>
</feature>
<feature type="modified residue" description="Phosphothreonine" evidence="7">
    <location>
        <position position="164"/>
    </location>
</feature>
<feature type="splice variant" id="VSP_023729" description="In isoform 2." evidence="5">
    <location>
        <begin position="1"/>
        <end position="50"/>
    </location>
</feature>
<feature type="splice variant" id="VSP_023730" description="In isoform 2." evidence="5">
    <location>
        <position position="435"/>
    </location>
</feature>
<feature type="splice variant" id="VSP_023731" description="In isoform 3." evidence="4">
    <original>ENSHGSSEHIKMQNQRLYEVGGNIGQHCLDPDAYILDVYHINPHAEWVIKP</original>
    <variation>KNPLATKHVLRGFLCVPVLDRFLDCPVGQ</variation>
    <location>
        <begin position="679"/>
        <end position="729"/>
    </location>
</feature>
<feature type="sequence conflict" description="In Ref. 3; BAD32425." evidence="6" ref="3">
    <original>T</original>
    <variation>TAAA</variation>
    <location>
        <position position="101"/>
    </location>
</feature>
<feature type="sequence conflict" description="In Ref. 2; AAH66788." evidence="6" ref="2">
    <original>H</original>
    <variation>R</variation>
    <location>
        <position position="258"/>
    </location>
</feature>
<feature type="sequence conflict" description="In Ref. 2; AAH66788." evidence="6" ref="2">
    <original>T</original>
    <variation>A</variation>
    <location>
        <position position="334"/>
    </location>
</feature>
<feature type="sequence conflict" description="In Ref. 2; AAH66788." evidence="6" ref="2">
    <original>A</original>
    <variation>T</variation>
    <location>
        <position position="361"/>
    </location>
</feature>
<feature type="sequence conflict" description="In Ref. 1; BAE21798." evidence="6" ref="1">
    <original>S</original>
    <variation>Y</variation>
    <location>
        <position position="473"/>
    </location>
</feature>
<feature type="sequence conflict" description="In Ref. 1; BAE24877." evidence="6" ref="1">
    <original>M</original>
    <variation>V</variation>
    <location>
        <position position="534"/>
    </location>
</feature>
<feature type="sequence conflict" description="In Ref. 2; AAH66788." evidence="6" ref="2">
    <original>I</original>
    <variation>V</variation>
    <location>
        <position position="672"/>
    </location>
</feature>
<protein>
    <recommendedName>
        <fullName>Rho GTPase-activating protein 28</fullName>
    </recommendedName>
    <alternativeName>
        <fullName>Rho-type GTPase-activating protein 28</fullName>
    </alternativeName>
</protein>
<sequence>MEVEDSGGVVLTAYHSHARSQPQGAEPRCASRASHPLSRKSIPRCRRINRMLSNESLHPPSFSRSNSQASVDSSASMEEFLREIESIKESSVGASQEQPPTAAAAAAEVKPVDEGELEAEWLQDVGLSTLISGNEEEDGKALLSTLTRTQAAAVKKRYNTYTQTLRKKNKQPVRDVRDIFGVSESPPSDSCEHATQLDGTKEEKDLPGVTKTSRPLPDDASLSSTTLSNGAQDEEGGFVALQSGSVSILEAIPDIAVHTNGSADAEQSVQSTLSDDDYHGKNVPAEAEELSFEVSYSEMVTEMPDRNKWKKSDIKKEDYVLTKFIIQKTRFGLTETGDLSVEDMKKIRHLSLIELTAFFDAFGIQLKRNKTERVRGRDNGIFGVPLTVLLDNDRKKDPAVKVPLVLQKFFQKVEESGLESEGIFRLSGCTAKVKQYREELDARFNADKFKWDKMCHREAAVMLKAFFRELPTSLFPVEYIPAFISLMERGPDIKVQFQALHLMVMALPDANRDTAQALMAFFNKVIANESKNRMNLWNISTVMAPNLFFSRSKHSDCEELLLANTATHIIRLMLKYQKILWKVPSFLITQVRRMNEATMLLKKQLPSMKKLLRRKTLDREVSILKTSKVPQKSPSSRRMSDVPEGVIRVHAPLLSKVSMAIQLNSQTKAKDILAKFQYENSHGSSEHIKMQNQRLYEVGGNIGQHCLDPDAYILDVYHINPHAEWVIKP</sequence>
<reference key="1">
    <citation type="journal article" date="2005" name="Science">
        <title>The transcriptional landscape of the mammalian genome.</title>
        <authorList>
            <person name="Carninci P."/>
            <person name="Kasukawa T."/>
            <person name="Katayama S."/>
            <person name="Gough J."/>
            <person name="Frith M.C."/>
            <person name="Maeda N."/>
            <person name="Oyama R."/>
            <person name="Ravasi T."/>
            <person name="Lenhard B."/>
            <person name="Wells C."/>
            <person name="Kodzius R."/>
            <person name="Shimokawa K."/>
            <person name="Bajic V.B."/>
            <person name="Brenner S.E."/>
            <person name="Batalov S."/>
            <person name="Forrest A.R."/>
            <person name="Zavolan M."/>
            <person name="Davis M.J."/>
            <person name="Wilming L.G."/>
            <person name="Aidinis V."/>
            <person name="Allen J.E."/>
            <person name="Ambesi-Impiombato A."/>
            <person name="Apweiler R."/>
            <person name="Aturaliya R.N."/>
            <person name="Bailey T.L."/>
            <person name="Bansal M."/>
            <person name="Baxter L."/>
            <person name="Beisel K.W."/>
            <person name="Bersano T."/>
            <person name="Bono H."/>
            <person name="Chalk A.M."/>
            <person name="Chiu K.P."/>
            <person name="Choudhary V."/>
            <person name="Christoffels A."/>
            <person name="Clutterbuck D.R."/>
            <person name="Crowe M.L."/>
            <person name="Dalla E."/>
            <person name="Dalrymple B.P."/>
            <person name="de Bono B."/>
            <person name="Della Gatta G."/>
            <person name="di Bernardo D."/>
            <person name="Down T."/>
            <person name="Engstrom P."/>
            <person name="Fagiolini M."/>
            <person name="Faulkner G."/>
            <person name="Fletcher C.F."/>
            <person name="Fukushima T."/>
            <person name="Furuno M."/>
            <person name="Futaki S."/>
            <person name="Gariboldi M."/>
            <person name="Georgii-Hemming P."/>
            <person name="Gingeras T.R."/>
            <person name="Gojobori T."/>
            <person name="Green R.E."/>
            <person name="Gustincich S."/>
            <person name="Harbers M."/>
            <person name="Hayashi Y."/>
            <person name="Hensch T.K."/>
            <person name="Hirokawa N."/>
            <person name="Hill D."/>
            <person name="Huminiecki L."/>
            <person name="Iacono M."/>
            <person name="Ikeo K."/>
            <person name="Iwama A."/>
            <person name="Ishikawa T."/>
            <person name="Jakt M."/>
            <person name="Kanapin A."/>
            <person name="Katoh M."/>
            <person name="Kawasawa Y."/>
            <person name="Kelso J."/>
            <person name="Kitamura H."/>
            <person name="Kitano H."/>
            <person name="Kollias G."/>
            <person name="Krishnan S.P."/>
            <person name="Kruger A."/>
            <person name="Kummerfeld S.K."/>
            <person name="Kurochkin I.V."/>
            <person name="Lareau L.F."/>
            <person name="Lazarevic D."/>
            <person name="Lipovich L."/>
            <person name="Liu J."/>
            <person name="Liuni S."/>
            <person name="McWilliam S."/>
            <person name="Madan Babu M."/>
            <person name="Madera M."/>
            <person name="Marchionni L."/>
            <person name="Matsuda H."/>
            <person name="Matsuzawa S."/>
            <person name="Miki H."/>
            <person name="Mignone F."/>
            <person name="Miyake S."/>
            <person name="Morris K."/>
            <person name="Mottagui-Tabar S."/>
            <person name="Mulder N."/>
            <person name="Nakano N."/>
            <person name="Nakauchi H."/>
            <person name="Ng P."/>
            <person name="Nilsson R."/>
            <person name="Nishiguchi S."/>
            <person name="Nishikawa S."/>
            <person name="Nori F."/>
            <person name="Ohara O."/>
            <person name="Okazaki Y."/>
            <person name="Orlando V."/>
            <person name="Pang K.C."/>
            <person name="Pavan W.J."/>
            <person name="Pavesi G."/>
            <person name="Pesole G."/>
            <person name="Petrovsky N."/>
            <person name="Piazza S."/>
            <person name="Reed J."/>
            <person name="Reid J.F."/>
            <person name="Ring B.Z."/>
            <person name="Ringwald M."/>
            <person name="Rost B."/>
            <person name="Ruan Y."/>
            <person name="Salzberg S.L."/>
            <person name="Sandelin A."/>
            <person name="Schneider C."/>
            <person name="Schoenbach C."/>
            <person name="Sekiguchi K."/>
            <person name="Semple C.A."/>
            <person name="Seno S."/>
            <person name="Sessa L."/>
            <person name="Sheng Y."/>
            <person name="Shibata Y."/>
            <person name="Shimada H."/>
            <person name="Shimada K."/>
            <person name="Silva D."/>
            <person name="Sinclair B."/>
            <person name="Sperling S."/>
            <person name="Stupka E."/>
            <person name="Sugiura K."/>
            <person name="Sultana R."/>
            <person name="Takenaka Y."/>
            <person name="Taki K."/>
            <person name="Tammoja K."/>
            <person name="Tan S.L."/>
            <person name="Tang S."/>
            <person name="Taylor M.S."/>
            <person name="Tegner J."/>
            <person name="Teichmann S.A."/>
            <person name="Ueda H.R."/>
            <person name="van Nimwegen E."/>
            <person name="Verardo R."/>
            <person name="Wei C.L."/>
            <person name="Yagi K."/>
            <person name="Yamanishi H."/>
            <person name="Zabarovsky E."/>
            <person name="Zhu S."/>
            <person name="Zimmer A."/>
            <person name="Hide W."/>
            <person name="Bult C."/>
            <person name="Grimmond S.M."/>
            <person name="Teasdale R.D."/>
            <person name="Liu E.T."/>
            <person name="Brusic V."/>
            <person name="Quackenbush J."/>
            <person name="Wahlestedt C."/>
            <person name="Mattick J.S."/>
            <person name="Hume D.A."/>
            <person name="Kai C."/>
            <person name="Sasaki D."/>
            <person name="Tomaru Y."/>
            <person name="Fukuda S."/>
            <person name="Kanamori-Katayama M."/>
            <person name="Suzuki M."/>
            <person name="Aoki J."/>
            <person name="Arakawa T."/>
            <person name="Iida J."/>
            <person name="Imamura K."/>
            <person name="Itoh M."/>
            <person name="Kato T."/>
            <person name="Kawaji H."/>
            <person name="Kawagashira N."/>
            <person name="Kawashima T."/>
            <person name="Kojima M."/>
            <person name="Kondo S."/>
            <person name="Konno H."/>
            <person name="Nakano K."/>
            <person name="Ninomiya N."/>
            <person name="Nishio T."/>
            <person name="Okada M."/>
            <person name="Plessy C."/>
            <person name="Shibata K."/>
            <person name="Shiraki T."/>
            <person name="Suzuki S."/>
            <person name="Tagami M."/>
            <person name="Waki K."/>
            <person name="Watahiki A."/>
            <person name="Okamura-Oho Y."/>
            <person name="Suzuki H."/>
            <person name="Kawai J."/>
            <person name="Hayashizaki Y."/>
        </authorList>
    </citation>
    <scope>NUCLEOTIDE SEQUENCE [LARGE SCALE MRNA] (ISOFORMS 1 AND 2)</scope>
    <source>
        <strain>C57BL/6J</strain>
        <tissue>Eye</tissue>
        <tissue>Head</tissue>
        <tissue>Muellerian duct</tissue>
        <tissue>Spinal ganglion</tissue>
    </source>
</reference>
<reference key="2">
    <citation type="journal article" date="2004" name="Genome Res.">
        <title>The status, quality, and expansion of the NIH full-length cDNA project: the Mammalian Gene Collection (MGC).</title>
        <authorList>
            <consortium name="The MGC Project Team"/>
        </authorList>
    </citation>
    <scope>NUCLEOTIDE SEQUENCE [LARGE SCALE MRNA] (ISOFORM 3)</scope>
    <source>
        <strain>C57BL/6J</strain>
        <tissue>Egg</tissue>
    </source>
</reference>
<reference key="3">
    <citation type="journal article" date="2004" name="DNA Res.">
        <title>Prediction of the coding sequences of mouse homologues of KIAA gene: IV. The complete nucleotide sequences of 500 mouse KIAA-homologous cDNAs identified by screening of terminal sequences of cDNA clones randomly sampled from size-fractionated libraries.</title>
        <authorList>
            <person name="Okazaki N."/>
            <person name="Kikuno R."/>
            <person name="Ohara R."/>
            <person name="Inamoto S."/>
            <person name="Koseki H."/>
            <person name="Hiraoka S."/>
            <person name="Saga Y."/>
            <person name="Seino S."/>
            <person name="Nishimura M."/>
            <person name="Kaisho T."/>
            <person name="Hoshino K."/>
            <person name="Kitamura H."/>
            <person name="Nagase T."/>
            <person name="Ohara O."/>
            <person name="Koga H."/>
        </authorList>
    </citation>
    <scope>NUCLEOTIDE SEQUENCE [LARGE SCALE MRNA] OF 96-729</scope>
    <source>
        <tissue>Embryonic tail</tissue>
    </source>
</reference>
<reference key="4">
    <citation type="journal article" date="2007" name="Science">
        <title>ATM and ATR substrate analysis reveals extensive protein networks responsive to DNA damage.</title>
        <authorList>
            <person name="Matsuoka S."/>
            <person name="Ballif B.A."/>
            <person name="Smogorzewska A."/>
            <person name="McDonald E.R. III"/>
            <person name="Hurov K.E."/>
            <person name="Luo J."/>
            <person name="Bakalarski C.E."/>
            <person name="Zhao Z."/>
            <person name="Solimini N."/>
            <person name="Lerenthal Y."/>
            <person name="Shiloh Y."/>
            <person name="Gygi S.P."/>
            <person name="Elledge S.J."/>
        </authorList>
    </citation>
    <scope>PHOSPHORYLATION [LARGE SCALE ANALYSIS] AT THR-164</scope>
    <scope>IDENTIFICATION BY MASS SPECTROMETRY [LARGE SCALE ANALYSIS]</scope>
    <source>
        <tissue>Embryonic fibroblast</tissue>
    </source>
</reference>
<reference key="5">
    <citation type="journal article" date="2010" name="Cell">
        <title>A tissue-specific atlas of mouse protein phosphorylation and expression.</title>
        <authorList>
            <person name="Huttlin E.L."/>
            <person name="Jedrychowski M.P."/>
            <person name="Elias J.E."/>
            <person name="Goswami T."/>
            <person name="Rad R."/>
            <person name="Beausoleil S.A."/>
            <person name="Villen J."/>
            <person name="Haas W."/>
            <person name="Sowa M.E."/>
            <person name="Gygi S.P."/>
        </authorList>
    </citation>
    <scope>PHOSPHORYLATION [LARGE SCALE ANALYSIS] AT SER-70</scope>
    <scope>IDENTIFICATION BY MASS SPECTROMETRY [LARGE SCALE ANALYSIS]</scope>
    <source>
        <tissue>Kidney</tissue>
    </source>
</reference>
<accession>Q8BN58</accession>
<accession>Q3TSH7</accession>
<accession>Q3UR11</accession>
<accession>Q3UZQ7</accession>
<accession>Q69ZM1</accession>
<accession>Q6NY11</accession>
<name>RHG28_MOUSE</name>
<keyword id="KW-0025">Alternative splicing</keyword>
<keyword id="KW-0343">GTPase activation</keyword>
<keyword id="KW-0597">Phosphoprotein</keyword>
<keyword id="KW-1185">Reference proteome</keyword>
<proteinExistence type="evidence at protein level"/>
<organism>
    <name type="scientific">Mus musculus</name>
    <name type="common">Mouse</name>
    <dbReference type="NCBI Taxonomy" id="10090"/>
    <lineage>
        <taxon>Eukaryota</taxon>
        <taxon>Metazoa</taxon>
        <taxon>Chordata</taxon>
        <taxon>Craniata</taxon>
        <taxon>Vertebrata</taxon>
        <taxon>Euteleostomi</taxon>
        <taxon>Mammalia</taxon>
        <taxon>Eutheria</taxon>
        <taxon>Euarchontoglires</taxon>
        <taxon>Glires</taxon>
        <taxon>Rodentia</taxon>
        <taxon>Myomorpha</taxon>
        <taxon>Muroidea</taxon>
        <taxon>Muridae</taxon>
        <taxon>Murinae</taxon>
        <taxon>Mus</taxon>
        <taxon>Mus</taxon>
    </lineage>
</organism>
<comment type="function">
    <text evidence="1">GTPase activator for the Rho-type GTPases by converting them to an inactive GDP-bound state.</text>
</comment>
<comment type="alternative products">
    <event type="alternative splicing"/>
    <isoform>
        <id>Q8BN58-1</id>
        <name>1</name>
        <sequence type="displayed"/>
    </isoform>
    <isoform>
        <id>Q8BN58-2</id>
        <name>2</name>
        <sequence type="described" ref="VSP_023729 VSP_023730"/>
    </isoform>
    <isoform>
        <id>Q8BN58-3</id>
        <name>3</name>
        <sequence type="described" ref="VSP_023731"/>
    </isoform>
</comment>
<comment type="sequence caution" evidence="6">
    <conflict type="erroneous initiation">
        <sequence resource="EMBL-CDS" id="BAE36698"/>
    </conflict>
</comment>
<evidence type="ECO:0000250" key="1"/>
<evidence type="ECO:0000255" key="2">
    <source>
        <dbReference type="PROSITE-ProRule" id="PRU00172"/>
    </source>
</evidence>
<evidence type="ECO:0000256" key="3">
    <source>
        <dbReference type="SAM" id="MobiDB-lite"/>
    </source>
</evidence>
<evidence type="ECO:0000303" key="4">
    <source>
    </source>
</evidence>
<evidence type="ECO:0000303" key="5">
    <source>
    </source>
</evidence>
<evidence type="ECO:0000305" key="6"/>
<evidence type="ECO:0007744" key="7">
    <source>
    </source>
</evidence>
<evidence type="ECO:0007744" key="8">
    <source>
    </source>
</evidence>
<dbReference type="EMBL" id="AK087523">
    <property type="protein sequence ID" value="BAC39911.1"/>
    <property type="molecule type" value="mRNA"/>
</dbReference>
<dbReference type="EMBL" id="AK133720">
    <property type="protein sequence ID" value="BAE21798.1"/>
    <property type="molecule type" value="mRNA"/>
</dbReference>
<dbReference type="EMBL" id="AK141901">
    <property type="protein sequence ID" value="BAE24877.1"/>
    <property type="molecule type" value="mRNA"/>
</dbReference>
<dbReference type="EMBL" id="AK162051">
    <property type="protein sequence ID" value="BAE36698.1"/>
    <property type="status" value="ALT_INIT"/>
    <property type="molecule type" value="mRNA"/>
</dbReference>
<dbReference type="EMBL" id="BC066788">
    <property type="protein sequence ID" value="AAH66788.1"/>
    <property type="molecule type" value="mRNA"/>
</dbReference>
<dbReference type="EMBL" id="AK173147">
    <property type="protein sequence ID" value="BAD32425.1"/>
    <property type="molecule type" value="mRNA"/>
</dbReference>
<dbReference type="CCDS" id="CCDS28950.1">
    <molecule id="Q8BN58-1"/>
</dbReference>
<dbReference type="CCDS" id="CCDS84329.1">
    <molecule id="Q8BN58-2"/>
</dbReference>
<dbReference type="RefSeq" id="NP_001334339.1">
    <molecule id="Q8BN58-2"/>
    <property type="nucleotide sequence ID" value="NM_001347410.1"/>
</dbReference>
<dbReference type="RefSeq" id="NP_766552.3">
    <molecule id="Q8BN58-1"/>
    <property type="nucleotide sequence ID" value="NM_172964.4"/>
</dbReference>
<dbReference type="SMR" id="Q8BN58"/>
<dbReference type="BioGRID" id="234587">
    <property type="interactions" value="16"/>
</dbReference>
<dbReference type="FunCoup" id="Q8BN58">
    <property type="interactions" value="924"/>
</dbReference>
<dbReference type="IntAct" id="Q8BN58">
    <property type="interactions" value="6"/>
</dbReference>
<dbReference type="STRING" id="10090.ENSMUSP00000024840"/>
<dbReference type="GlyGen" id="Q8BN58">
    <property type="glycosylation" value="2 sites, 1 O-linked glycan (2 sites)"/>
</dbReference>
<dbReference type="iPTMnet" id="Q8BN58"/>
<dbReference type="PhosphoSitePlus" id="Q8BN58"/>
<dbReference type="PaxDb" id="10090-ENSMUSP00000024840"/>
<dbReference type="ProteomicsDB" id="253278">
    <molecule id="Q8BN58-1"/>
</dbReference>
<dbReference type="ProteomicsDB" id="253279">
    <molecule id="Q8BN58-2"/>
</dbReference>
<dbReference type="ProteomicsDB" id="253280">
    <molecule id="Q8BN58-3"/>
</dbReference>
<dbReference type="Pumba" id="Q8BN58"/>
<dbReference type="Antibodypedia" id="21924">
    <property type="antibodies" value="122 antibodies from 22 providers"/>
</dbReference>
<dbReference type="DNASU" id="268970"/>
<dbReference type="Ensembl" id="ENSMUST00000024840.12">
    <molecule id="Q8BN58-1"/>
    <property type="protein sequence ID" value="ENSMUSP00000024840.6"/>
    <property type="gene ID" value="ENSMUSG00000024043.14"/>
</dbReference>
<dbReference type="Ensembl" id="ENSMUST00000163865.8">
    <molecule id="Q8BN58-2"/>
    <property type="protein sequence ID" value="ENSMUSP00000130960.2"/>
    <property type="gene ID" value="ENSMUSG00000024043.14"/>
</dbReference>
<dbReference type="GeneID" id="268970"/>
<dbReference type="KEGG" id="mmu:268970"/>
<dbReference type="UCSC" id="uc008dki.2">
    <molecule id="Q8BN58-2"/>
    <property type="organism name" value="mouse"/>
</dbReference>
<dbReference type="UCSC" id="uc008dkj.2">
    <molecule id="Q8BN58-1"/>
    <property type="organism name" value="mouse"/>
</dbReference>
<dbReference type="AGR" id="MGI:2147003"/>
<dbReference type="CTD" id="79822"/>
<dbReference type="MGI" id="MGI:2147003">
    <property type="gene designation" value="Arhgap28"/>
</dbReference>
<dbReference type="VEuPathDB" id="HostDB:ENSMUSG00000024043"/>
<dbReference type="eggNOG" id="KOG2200">
    <property type="taxonomic scope" value="Eukaryota"/>
</dbReference>
<dbReference type="GeneTree" id="ENSGT00940000158929"/>
<dbReference type="HOGENOM" id="CLU_023268_2_0_1"/>
<dbReference type="InParanoid" id="Q8BN58"/>
<dbReference type="OMA" id="WVIKPQA"/>
<dbReference type="OrthoDB" id="27680at2759"/>
<dbReference type="PhylomeDB" id="Q8BN58"/>
<dbReference type="TreeFam" id="TF314044"/>
<dbReference type="Reactome" id="R-MMU-8980692">
    <property type="pathway name" value="RHOA GTPase cycle"/>
</dbReference>
<dbReference type="BioGRID-ORCS" id="268970">
    <property type="hits" value="2 hits in 76 CRISPR screens"/>
</dbReference>
<dbReference type="ChiTaRS" id="Arhgap28">
    <property type="organism name" value="mouse"/>
</dbReference>
<dbReference type="PRO" id="PR:Q8BN58"/>
<dbReference type="Proteomes" id="UP000000589">
    <property type="component" value="Chromosome 17"/>
</dbReference>
<dbReference type="RNAct" id="Q8BN58">
    <property type="molecule type" value="protein"/>
</dbReference>
<dbReference type="Bgee" id="ENSMUSG00000024043">
    <property type="expression patterns" value="Expressed in lumbar dorsal root ganglion and 148 other cell types or tissues"/>
</dbReference>
<dbReference type="ExpressionAtlas" id="Q8BN58">
    <property type="expression patterns" value="baseline and differential"/>
</dbReference>
<dbReference type="GO" id="GO:0030054">
    <property type="term" value="C:cell junction"/>
    <property type="evidence" value="ECO:0007669"/>
    <property type="project" value="Ensembl"/>
</dbReference>
<dbReference type="GO" id="GO:0005654">
    <property type="term" value="C:nucleoplasm"/>
    <property type="evidence" value="ECO:0007669"/>
    <property type="project" value="Ensembl"/>
</dbReference>
<dbReference type="GO" id="GO:0005096">
    <property type="term" value="F:GTPase activator activity"/>
    <property type="evidence" value="ECO:0000250"/>
    <property type="project" value="MGI"/>
</dbReference>
<dbReference type="GO" id="GO:0051497">
    <property type="term" value="P:negative regulation of stress fiber assembly"/>
    <property type="evidence" value="ECO:0000314"/>
    <property type="project" value="MGI"/>
</dbReference>
<dbReference type="GO" id="GO:0007165">
    <property type="term" value="P:signal transduction"/>
    <property type="evidence" value="ECO:0007669"/>
    <property type="project" value="InterPro"/>
</dbReference>
<dbReference type="CDD" id="cd04391">
    <property type="entry name" value="RhoGAP_ARHGAP18"/>
    <property type="match status" value="1"/>
</dbReference>
<dbReference type="FunFam" id="1.10.555.10:FF:000018">
    <property type="entry name" value="Rho GTPase activating protein 28"/>
    <property type="match status" value="1"/>
</dbReference>
<dbReference type="Gene3D" id="1.10.555.10">
    <property type="entry name" value="Rho GTPase activation protein"/>
    <property type="match status" value="1"/>
</dbReference>
<dbReference type="InterPro" id="IPR008936">
    <property type="entry name" value="Rho_GTPase_activation_prot"/>
</dbReference>
<dbReference type="InterPro" id="IPR000198">
    <property type="entry name" value="RhoGAP_dom"/>
</dbReference>
<dbReference type="PANTHER" id="PTHR14963">
    <property type="entry name" value="RHO GTPASE ACTIVATING PROTEIN 18,19-RELATED"/>
    <property type="match status" value="1"/>
</dbReference>
<dbReference type="PANTHER" id="PTHR14963:SF5">
    <property type="entry name" value="RHO GTPASE-ACTIVATING PROTEIN 28"/>
    <property type="match status" value="1"/>
</dbReference>
<dbReference type="Pfam" id="PF00620">
    <property type="entry name" value="RhoGAP"/>
    <property type="match status" value="1"/>
</dbReference>
<dbReference type="Pfam" id="PF25442">
    <property type="entry name" value="Ubiquitin_RHG40_C"/>
    <property type="match status" value="1"/>
</dbReference>
<dbReference type="SMART" id="SM00324">
    <property type="entry name" value="RhoGAP"/>
    <property type="match status" value="1"/>
</dbReference>
<dbReference type="SUPFAM" id="SSF48350">
    <property type="entry name" value="GTPase activation domain, GAP"/>
    <property type="match status" value="1"/>
</dbReference>
<dbReference type="PROSITE" id="PS50238">
    <property type="entry name" value="RHOGAP"/>
    <property type="match status" value="1"/>
</dbReference>
<gene>
    <name type="primary">Arhgap28</name>
    <name type="synonym">Kiaa1314</name>
</gene>